<name>RDRP_SCPMV</name>
<protein>
    <recommendedName>
        <fullName>Replicase polyprotein P2AB</fullName>
    </recommendedName>
    <component>
        <recommendedName>
            <fullName>N-terminal protein</fullName>
        </recommendedName>
    </component>
    <component>
        <recommendedName>
            <fullName>Serine protease</fullName>
            <ecNumber>3.4.21.-</ecNumber>
        </recommendedName>
    </component>
    <component>
        <recommendedName>
            <fullName>VPg</fullName>
        </recommendedName>
    </component>
    <component>
        <recommendedName>
            <fullName>RNA-directed RNA polymerase</fullName>
            <ecNumber>2.7.7.48</ecNumber>
        </recommendedName>
        <alternativeName>
            <fullName>RdRp</fullName>
        </alternativeName>
    </component>
</protein>
<keyword id="KW-0191">Covalent protein-RNA linkage</keyword>
<keyword id="KW-1043">Host membrane</keyword>
<keyword id="KW-0378">Hydrolase</keyword>
<keyword id="KW-0472">Membrane</keyword>
<keyword id="KW-0547">Nucleotide-binding</keyword>
<keyword id="KW-0548">Nucleotidyltransferase</keyword>
<keyword id="KW-0645">Protease</keyword>
<keyword id="KW-1185">Reference proteome</keyword>
<keyword id="KW-0688">Ribosomal frameshifting</keyword>
<keyword id="KW-0696">RNA-directed RNA polymerase</keyword>
<keyword id="KW-0720">Serine protease</keyword>
<keyword id="KW-0808">Transferase</keyword>
<keyword id="KW-0812">Transmembrane</keyword>
<keyword id="KW-1133">Transmembrane helix</keyword>
<keyword id="KW-0693">Viral RNA replication</keyword>
<comment type="function">
    <molecule>Serine protease</molecule>
    <text>Responsible for cleavage of polyprotein P2A and replicase polyprotein P2AB.</text>
</comment>
<comment type="function">
    <molecule>VPg</molecule>
    <text>Covalently attached to the 5' extremity of the genomic and subgenomic RNAs. It may serve as a primer for the replicase.</text>
</comment>
<comment type="function">
    <molecule>RNA-directed RNA polymerase</molecule>
    <text evidence="3">Replicates the viral genome.</text>
</comment>
<comment type="catalytic activity">
    <reaction evidence="3">
        <text>RNA(n) + a ribonucleoside 5'-triphosphate = RNA(n+1) + diphosphate</text>
        <dbReference type="Rhea" id="RHEA:21248"/>
        <dbReference type="Rhea" id="RHEA-COMP:14527"/>
        <dbReference type="Rhea" id="RHEA-COMP:17342"/>
        <dbReference type="ChEBI" id="CHEBI:33019"/>
        <dbReference type="ChEBI" id="CHEBI:61557"/>
        <dbReference type="ChEBI" id="CHEBI:140395"/>
        <dbReference type="EC" id="2.7.7.48"/>
    </reaction>
</comment>
<comment type="subcellular location">
    <molecule>N-terminal protein</molecule>
    <subcellularLocation>
        <location evidence="5">Host membrane</location>
        <topology evidence="5">Multi-pass membrane protein</topology>
    </subcellularLocation>
</comment>
<comment type="subcellular location">
    <molecule>Replicase polyprotein P2AB</molecule>
    <subcellularLocation>
        <location evidence="5">Host membrane</location>
        <topology evidence="5">Multi-pass membrane protein</topology>
    </subcellularLocation>
</comment>
<comment type="alternative products">
    <event type="ribosomal frameshifting"/>
    <isoform>
        <id>P21405-1</id>
        <name>Replicase polyprotein P2AB</name>
        <sequence type="displayed"/>
    </isoform>
    <isoform>
        <id>Q83470-1</id>
        <name>Polyprotein P2A</name>
        <sequence type="external"/>
    </isoform>
</comment>
<comment type="PTM">
    <text>The polyprotein is proteolytically cleaved into several chains by the viral protease.</text>
</comment>
<comment type="miscellaneous">
    <molecule>Isoform Replicase polyprotein P2AB</molecule>
    <text>Produced by -1 ribosomal frameshifting at the 2A-2B genes boundary.</text>
</comment>
<gene>
    <name type="ORF">ORF2A-2B</name>
</gene>
<dbReference type="EC" id="3.4.21.-"/>
<dbReference type="EC" id="2.7.7.48"/>
<dbReference type="EMBL" id="M23021">
    <property type="protein sequence ID" value="AAA46565.1"/>
    <property type="molecule type" value="Genomic_RNA"/>
</dbReference>
<dbReference type="PIR" id="B33739">
    <property type="entry name" value="RRBWSC"/>
</dbReference>
<dbReference type="RefSeq" id="NP_042301.2">
    <property type="nucleotide sequence ID" value="NC_001625.2"/>
</dbReference>
<dbReference type="RefSeq" id="NP_042302.3">
    <molecule id="P21405-1"/>
    <property type="nucleotide sequence ID" value="NC_001625.2"/>
</dbReference>
<dbReference type="SMR" id="P21405"/>
<dbReference type="KEGG" id="vg:1481842"/>
<dbReference type="KEGG" id="vg:1481843"/>
<dbReference type="Proteomes" id="UP000008033">
    <property type="component" value="Genome"/>
</dbReference>
<dbReference type="GO" id="GO:0033644">
    <property type="term" value="C:host cell membrane"/>
    <property type="evidence" value="ECO:0007669"/>
    <property type="project" value="UniProtKB-SubCell"/>
</dbReference>
<dbReference type="GO" id="GO:0016020">
    <property type="term" value="C:membrane"/>
    <property type="evidence" value="ECO:0007669"/>
    <property type="project" value="UniProtKB-KW"/>
</dbReference>
<dbReference type="GO" id="GO:0000166">
    <property type="term" value="F:nucleotide binding"/>
    <property type="evidence" value="ECO:0007669"/>
    <property type="project" value="UniProtKB-KW"/>
</dbReference>
<dbReference type="GO" id="GO:0003723">
    <property type="term" value="F:RNA binding"/>
    <property type="evidence" value="ECO:0007669"/>
    <property type="project" value="InterPro"/>
</dbReference>
<dbReference type="GO" id="GO:0003968">
    <property type="term" value="F:RNA-directed RNA polymerase activity"/>
    <property type="evidence" value="ECO:0007669"/>
    <property type="project" value="UniProtKB-KW"/>
</dbReference>
<dbReference type="GO" id="GO:0004252">
    <property type="term" value="F:serine-type endopeptidase activity"/>
    <property type="evidence" value="ECO:0007669"/>
    <property type="project" value="InterPro"/>
</dbReference>
<dbReference type="GO" id="GO:0006351">
    <property type="term" value="P:DNA-templated transcription"/>
    <property type="evidence" value="ECO:0007669"/>
    <property type="project" value="InterPro"/>
</dbReference>
<dbReference type="GO" id="GO:0006508">
    <property type="term" value="P:proteolysis"/>
    <property type="evidence" value="ECO:0007669"/>
    <property type="project" value="UniProtKB-KW"/>
</dbReference>
<dbReference type="GO" id="GO:0039694">
    <property type="term" value="P:viral RNA genome replication"/>
    <property type="evidence" value="ECO:0007669"/>
    <property type="project" value="InterPro"/>
</dbReference>
<dbReference type="GO" id="GO:0075523">
    <property type="term" value="P:viral translational frameshifting"/>
    <property type="evidence" value="ECO:0007669"/>
    <property type="project" value="UniProtKB-KW"/>
</dbReference>
<dbReference type="CDD" id="cd23180">
    <property type="entry name" value="ps-ssRNAv_Solemoviridae_RdRp"/>
    <property type="match status" value="1"/>
</dbReference>
<dbReference type="Gene3D" id="2.40.10.10">
    <property type="entry name" value="Trypsin-like serine proteases"/>
    <property type="match status" value="2"/>
</dbReference>
<dbReference type="InterPro" id="IPR043502">
    <property type="entry name" value="DNA/RNA_pol_sf"/>
</dbReference>
<dbReference type="InterPro" id="IPR009003">
    <property type="entry name" value="Peptidase_S1_PA"/>
</dbReference>
<dbReference type="InterPro" id="IPR043504">
    <property type="entry name" value="Peptidase_S1_PA_chymotrypsin"/>
</dbReference>
<dbReference type="InterPro" id="IPR000382">
    <property type="entry name" value="Peptidase_S39B_luteovirus"/>
</dbReference>
<dbReference type="InterPro" id="IPR001795">
    <property type="entry name" value="RNA-dir_pol_luteovirus"/>
</dbReference>
<dbReference type="InterPro" id="IPR007094">
    <property type="entry name" value="RNA-dir_pol_PSvirus"/>
</dbReference>
<dbReference type="Pfam" id="PF02123">
    <property type="entry name" value="RdRP_4"/>
    <property type="match status" value="1"/>
</dbReference>
<dbReference type="PRINTS" id="PR00914">
    <property type="entry name" value="LVIRUSRNAPOL"/>
</dbReference>
<dbReference type="SUPFAM" id="SSF56672">
    <property type="entry name" value="DNA/RNA polymerases"/>
    <property type="match status" value="1"/>
</dbReference>
<dbReference type="SUPFAM" id="SSF50494">
    <property type="entry name" value="Trypsin-like serine proteases"/>
    <property type="match status" value="1"/>
</dbReference>
<dbReference type="PROSITE" id="PS51868">
    <property type="entry name" value="PEPTIDASE_S39"/>
    <property type="match status" value="1"/>
</dbReference>
<dbReference type="PROSITE" id="PS50507">
    <property type="entry name" value="RDRP_SSRNA_POS"/>
    <property type="match status" value="1"/>
</dbReference>
<reference key="1">
    <citation type="journal article" date="1987" name="Virology">
        <title>Sequence and organization of southern bean mosaic virus genomic RNA.</title>
        <authorList>
            <person name="Wu S."/>
            <person name="Rinehart C.A."/>
            <person name="Kaesberg P."/>
        </authorList>
    </citation>
    <scope>NUCLEOTIDE SEQUENCE [GENOMIC RNA]</scope>
</reference>
<reference key="2">
    <citation type="journal article" date="2007" name="Arch. Virol.">
        <title>Sobemoviruses possess a common CfMV-like genomic organization.</title>
        <authorList>
            <person name="Meier M."/>
            <person name="Truve E."/>
        </authorList>
    </citation>
    <scope>SEQUENCE REVISION TO 555</scope>
    <scope>GENOME REANNOTATION</scope>
    <scope>RIBOSOMAL FRAMESHIFT</scope>
</reference>
<organismHost>
    <name type="scientific">Glycine max</name>
    <name type="common">Soybean</name>
    <name type="synonym">Glycine hispida</name>
    <dbReference type="NCBI Taxonomy" id="3847"/>
</organismHost>
<organismHost>
    <name type="scientific">Phaseolus vulgaris</name>
    <name type="common">Kidney bean</name>
    <name type="synonym">French bean</name>
    <dbReference type="NCBI Taxonomy" id="3885"/>
</organismHost>
<organismHost>
    <name type="scientific">Vigna mungo</name>
    <name type="common">Black gram</name>
    <name type="synonym">Phaseolus mungo</name>
    <dbReference type="NCBI Taxonomy" id="3915"/>
</organismHost>
<organismHost>
    <name type="scientific">Vigna unguiculata</name>
    <name type="common">Cowpea</name>
    <dbReference type="NCBI Taxonomy" id="3917"/>
</organismHost>
<accession>P21405</accession>
<proteinExistence type="inferred from homology"/>
<feature type="chain" id="PRO_0000222496" description="Replicase polyprotein P2AB">
    <location>
        <begin position="1"/>
        <end position="956"/>
    </location>
</feature>
<feature type="chain" id="PRO_0000409843" description="N-terminal protein" evidence="2">
    <location>
        <begin position="1"/>
        <end position="132"/>
    </location>
</feature>
<feature type="chain" id="PRO_0000409844" description="Serine protease" evidence="2">
    <location>
        <begin position="133"/>
        <end position="325"/>
    </location>
</feature>
<feature type="chain" id="PRO_0000409845" description="VPg" evidence="2">
    <location>
        <begin position="326"/>
        <end position="402"/>
    </location>
</feature>
<feature type="chain" id="PRO_0000409846" description="RNA-directed RNA polymerase" evidence="2">
    <location>
        <begin position="403"/>
        <end position="956"/>
    </location>
</feature>
<feature type="transmembrane region" description="Helical" evidence="2">
    <location>
        <begin position="7"/>
        <end position="27"/>
    </location>
</feature>
<feature type="transmembrane region" description="Helical" evidence="2">
    <location>
        <begin position="37"/>
        <end position="57"/>
    </location>
</feature>
<feature type="transmembrane region" description="Helical" evidence="2">
    <location>
        <begin position="77"/>
        <end position="94"/>
    </location>
</feature>
<feature type="domain" description="Peptidase S39" evidence="4">
    <location>
        <begin position="135"/>
        <end position="330"/>
    </location>
</feature>
<feature type="domain" description="RdRp catalytic" evidence="3">
    <location>
        <begin position="694"/>
        <end position="808"/>
    </location>
</feature>
<feature type="active site" description="For protease activity" evidence="4">
    <location>
        <position position="181"/>
    </location>
</feature>
<feature type="active site" description="For protease activity" evidence="4">
    <location>
        <position position="216"/>
    </location>
</feature>
<feature type="active site" description="For protease activity" evidence="4">
    <location>
        <position position="284"/>
    </location>
</feature>
<feature type="site" description="Cleavage; by viral serine protease" evidence="2">
    <location>
        <begin position="132"/>
        <end position="133"/>
    </location>
</feature>
<feature type="site" description="Cleavage; by viral serine protease" evidence="1">
    <location>
        <begin position="325"/>
        <end position="326"/>
    </location>
</feature>
<feature type="site" description="Cleavage; by viral serine protease" evidence="2">
    <location>
        <begin position="402"/>
        <end position="403"/>
    </location>
</feature>
<sequence length="956" mass="104849">MYRPSCLSYVLLVANMWSFAVCANAFIYGSYDPSHNIPIVALMTLCATGLWLSTSVVSFGIRYVRVRVSPEKTQNRTIYVSSGLPHFDPVYGVVKKCEPMGGGPAIELQVNPSWIHLLPTSPAINKVEVGQESAILGSTYSVVETGGEPKSLVAVKSGDSTLGFGARVYHEGMDVLMVPHHVWYNDKPHTALAKNGRSVDTEDWEVEAACADPRIDFVLVKVPTAVWAKLAVRSTKVLAPVHGTAVQTFGGQDSKQLFSGLGKAKALDNAWEFTHTAPTAKGWSGTPLYTRDGIVGMHTGYVDIGTSNRAINMHFIMSCLVSKMETLPPELGYREISLEDVGLRSFEFLEVEIENRGKVKLGKREFAWVPKGKAWADMLDDDDLPLPPKMVNGNLVWADAQESFDGALPLNLLAGGRTQCLAAQIELGDYKFSCGPTHETGGMPFRNCGSSTCKFREVSRKPVADAVTAATKVFPELSELGWPERGSGAEIGSLLLQAGKFVPTKAPSNLEQAYNNLLSRYPRSKPLACFRQGTWSFDAIFEQVVSKATSAEINQKASPGVPLSRLATTNKDLMAQHMQFVAACVTGRVPLLASFEDIHALSPTEMVEMGLCDPVRLFVKQEPHPSRKLKEGRYRLISSVSIVDQLVERMLFGAQNELEIAEWQSIPSKPGMGLSVIHQADAIFRDLRVKHTVCPAAEADISGFDWSVQDWELWADVEMRIVLGSFPPMMARAARNRFSCFMNSVLQLSNGQLLQQELPGIMKSGSYCTSSTNSRIRCLMAELIGSPWCIAMGDDSVEGFVEGAREKYAGLGHLCKDYKPCATTPTGQLYAVEFCSHVIKRNKAFLTSWPKTLYRFLSTPRETLEDLERELASSPMWHKIQSYVRSIPSPDKTARDKSICNGYPLDQEAISTSYSEYSSKSASAEATREAACCAGAQAYPSWGIHGPYCSGDHGEA</sequence>
<evidence type="ECO:0000250" key="1"/>
<evidence type="ECO:0000255" key="2"/>
<evidence type="ECO:0000255" key="3">
    <source>
        <dbReference type="PROSITE-ProRule" id="PRU00539"/>
    </source>
</evidence>
<evidence type="ECO:0000255" key="4">
    <source>
        <dbReference type="PROSITE-ProRule" id="PRU01216"/>
    </source>
</evidence>
<evidence type="ECO:0000305" key="5"/>
<organism>
    <name type="scientific">Southern cowpea mosaic virus</name>
    <name type="common">SCPMV</name>
    <name type="synonym">Southern bean mosaic virus (strain cowpea)</name>
    <dbReference type="NCBI Taxonomy" id="196398"/>
    <lineage>
        <taxon>Viruses</taxon>
        <taxon>Riboviria</taxon>
        <taxon>Orthornavirae</taxon>
        <taxon>Pisuviricota</taxon>
        <taxon>Pisoniviricetes</taxon>
        <taxon>Sobelivirales</taxon>
        <taxon>Solemoviridae</taxon>
        <taxon>Sobemovirus</taxon>
    </lineage>
</organism>